<reference key="1">
    <citation type="journal article" date="2005" name="PLoS Biol.">
        <title>The genomes of Oryza sativa: a history of duplications.</title>
        <authorList>
            <person name="Yu J."/>
            <person name="Wang J."/>
            <person name="Lin W."/>
            <person name="Li S."/>
            <person name="Li H."/>
            <person name="Zhou J."/>
            <person name="Ni P."/>
            <person name="Dong W."/>
            <person name="Hu S."/>
            <person name="Zeng C."/>
            <person name="Zhang J."/>
            <person name="Zhang Y."/>
            <person name="Li R."/>
            <person name="Xu Z."/>
            <person name="Li S."/>
            <person name="Li X."/>
            <person name="Zheng H."/>
            <person name="Cong L."/>
            <person name="Lin L."/>
            <person name="Yin J."/>
            <person name="Geng J."/>
            <person name="Li G."/>
            <person name="Shi J."/>
            <person name="Liu J."/>
            <person name="Lv H."/>
            <person name="Li J."/>
            <person name="Wang J."/>
            <person name="Deng Y."/>
            <person name="Ran L."/>
            <person name="Shi X."/>
            <person name="Wang X."/>
            <person name="Wu Q."/>
            <person name="Li C."/>
            <person name="Ren X."/>
            <person name="Wang J."/>
            <person name="Wang X."/>
            <person name="Li D."/>
            <person name="Liu D."/>
            <person name="Zhang X."/>
            <person name="Ji Z."/>
            <person name="Zhao W."/>
            <person name="Sun Y."/>
            <person name="Zhang Z."/>
            <person name="Bao J."/>
            <person name="Han Y."/>
            <person name="Dong L."/>
            <person name="Ji J."/>
            <person name="Chen P."/>
            <person name="Wu S."/>
            <person name="Liu J."/>
            <person name="Xiao Y."/>
            <person name="Bu D."/>
            <person name="Tan J."/>
            <person name="Yang L."/>
            <person name="Ye C."/>
            <person name="Zhang J."/>
            <person name="Xu J."/>
            <person name="Zhou Y."/>
            <person name="Yu Y."/>
            <person name="Zhang B."/>
            <person name="Zhuang S."/>
            <person name="Wei H."/>
            <person name="Liu B."/>
            <person name="Lei M."/>
            <person name="Yu H."/>
            <person name="Li Y."/>
            <person name="Xu H."/>
            <person name="Wei S."/>
            <person name="He X."/>
            <person name="Fang L."/>
            <person name="Zhang Z."/>
            <person name="Zhang Y."/>
            <person name="Huang X."/>
            <person name="Su Z."/>
            <person name="Tong W."/>
            <person name="Li J."/>
            <person name="Tong Z."/>
            <person name="Li S."/>
            <person name="Ye J."/>
            <person name="Wang L."/>
            <person name="Fang L."/>
            <person name="Lei T."/>
            <person name="Chen C.-S."/>
            <person name="Chen H.-C."/>
            <person name="Xu Z."/>
            <person name="Li H."/>
            <person name="Huang H."/>
            <person name="Zhang F."/>
            <person name="Xu H."/>
            <person name="Li N."/>
            <person name="Zhao C."/>
            <person name="Li S."/>
            <person name="Dong L."/>
            <person name="Huang Y."/>
            <person name="Li L."/>
            <person name="Xi Y."/>
            <person name="Qi Q."/>
            <person name="Li W."/>
            <person name="Zhang B."/>
            <person name="Hu W."/>
            <person name="Zhang Y."/>
            <person name="Tian X."/>
            <person name="Jiao Y."/>
            <person name="Liang X."/>
            <person name="Jin J."/>
            <person name="Gao L."/>
            <person name="Zheng W."/>
            <person name="Hao B."/>
            <person name="Liu S.-M."/>
            <person name="Wang W."/>
            <person name="Yuan L."/>
            <person name="Cao M."/>
            <person name="McDermott J."/>
            <person name="Samudrala R."/>
            <person name="Wang J."/>
            <person name="Wong G.K.-S."/>
            <person name="Yang H."/>
        </authorList>
    </citation>
    <scope>NUCLEOTIDE SEQUENCE [LARGE SCALE GENOMIC DNA]</scope>
    <source>
        <strain>cv. 93-11</strain>
    </source>
</reference>
<dbReference type="EC" id="1.10.3.2"/>
<dbReference type="EMBL" id="CM000128">
    <property type="protein sequence ID" value="EAY88596.1"/>
    <property type="molecule type" value="Genomic_DNA"/>
</dbReference>
<dbReference type="SMR" id="A2XCN6"/>
<dbReference type="STRING" id="39946.A2XCN6"/>
<dbReference type="GlyCosmos" id="A2XCN6">
    <property type="glycosylation" value="10 sites, No reported glycans"/>
</dbReference>
<dbReference type="EnsemblPlants" id="BGIOSGA011887-TA">
    <property type="protein sequence ID" value="BGIOSGA011887-PA"/>
    <property type="gene ID" value="BGIOSGA011887"/>
</dbReference>
<dbReference type="Gramene" id="BGIOSGA011887-TA">
    <property type="protein sequence ID" value="BGIOSGA011887-PA"/>
    <property type="gene ID" value="BGIOSGA011887"/>
</dbReference>
<dbReference type="HOGENOM" id="CLU_006504_6_3_1"/>
<dbReference type="OMA" id="MVHEMNV"/>
<dbReference type="Proteomes" id="UP000007015">
    <property type="component" value="Chromosome 3"/>
</dbReference>
<dbReference type="GO" id="GO:0048046">
    <property type="term" value="C:apoplast"/>
    <property type="evidence" value="ECO:0007669"/>
    <property type="project" value="UniProtKB-SubCell"/>
</dbReference>
<dbReference type="GO" id="GO:0005507">
    <property type="term" value="F:copper ion binding"/>
    <property type="evidence" value="ECO:0007669"/>
    <property type="project" value="InterPro"/>
</dbReference>
<dbReference type="GO" id="GO:0052716">
    <property type="term" value="F:hydroquinone:oxygen oxidoreductase activity"/>
    <property type="evidence" value="ECO:0007669"/>
    <property type="project" value="UniProtKB-EC"/>
</dbReference>
<dbReference type="GO" id="GO:0046274">
    <property type="term" value="P:lignin catabolic process"/>
    <property type="evidence" value="ECO:0007669"/>
    <property type="project" value="UniProtKB-KW"/>
</dbReference>
<dbReference type="CDD" id="cd13849">
    <property type="entry name" value="CuRO_1_LCC_plant"/>
    <property type="match status" value="1"/>
</dbReference>
<dbReference type="CDD" id="cd13875">
    <property type="entry name" value="CuRO_2_LCC_plant"/>
    <property type="match status" value="1"/>
</dbReference>
<dbReference type="CDD" id="cd13897">
    <property type="entry name" value="CuRO_3_LCC_plant"/>
    <property type="match status" value="1"/>
</dbReference>
<dbReference type="Gene3D" id="2.60.40.420">
    <property type="entry name" value="Cupredoxins - blue copper proteins"/>
    <property type="match status" value="3"/>
</dbReference>
<dbReference type="InterPro" id="IPR011707">
    <property type="entry name" value="Cu-oxidase-like_N"/>
</dbReference>
<dbReference type="InterPro" id="IPR001117">
    <property type="entry name" value="Cu-oxidase_2nd"/>
</dbReference>
<dbReference type="InterPro" id="IPR011706">
    <property type="entry name" value="Cu-oxidase_C"/>
</dbReference>
<dbReference type="InterPro" id="IPR045087">
    <property type="entry name" value="Cu-oxidase_fam"/>
</dbReference>
<dbReference type="InterPro" id="IPR033138">
    <property type="entry name" value="Cu_oxidase_CS"/>
</dbReference>
<dbReference type="InterPro" id="IPR002355">
    <property type="entry name" value="Cu_oxidase_Cu_BS"/>
</dbReference>
<dbReference type="InterPro" id="IPR008972">
    <property type="entry name" value="Cupredoxin"/>
</dbReference>
<dbReference type="InterPro" id="IPR034288">
    <property type="entry name" value="CuRO_1_LCC"/>
</dbReference>
<dbReference type="InterPro" id="IPR034285">
    <property type="entry name" value="CuRO_2_LCC"/>
</dbReference>
<dbReference type="InterPro" id="IPR034289">
    <property type="entry name" value="CuRO_3_LCC"/>
</dbReference>
<dbReference type="InterPro" id="IPR017761">
    <property type="entry name" value="Laccase"/>
</dbReference>
<dbReference type="NCBIfam" id="TIGR03389">
    <property type="entry name" value="laccase"/>
    <property type="match status" value="1"/>
</dbReference>
<dbReference type="PANTHER" id="PTHR11709:SF86">
    <property type="entry name" value="LACCASE-18"/>
    <property type="match status" value="1"/>
</dbReference>
<dbReference type="PANTHER" id="PTHR11709">
    <property type="entry name" value="MULTI-COPPER OXIDASE"/>
    <property type="match status" value="1"/>
</dbReference>
<dbReference type="Pfam" id="PF00394">
    <property type="entry name" value="Cu-oxidase"/>
    <property type="match status" value="1"/>
</dbReference>
<dbReference type="Pfam" id="PF07731">
    <property type="entry name" value="Cu-oxidase_2"/>
    <property type="match status" value="1"/>
</dbReference>
<dbReference type="Pfam" id="PF07732">
    <property type="entry name" value="Cu-oxidase_3"/>
    <property type="match status" value="1"/>
</dbReference>
<dbReference type="SUPFAM" id="SSF49503">
    <property type="entry name" value="Cupredoxins"/>
    <property type="match status" value="3"/>
</dbReference>
<dbReference type="PROSITE" id="PS00079">
    <property type="entry name" value="MULTICOPPER_OXIDASE1"/>
    <property type="match status" value="1"/>
</dbReference>
<dbReference type="PROSITE" id="PS00080">
    <property type="entry name" value="MULTICOPPER_OXIDASE2"/>
    <property type="match status" value="1"/>
</dbReference>
<sequence length="595" mass="66058">MEKLSTAASLFGVVVAATALAMAVVGGEAAVVEQTFMVHEMNVTHLCNTTKIYVVNGRFPGPTVDVTEGDTVVVHVINRLPHGLTIHWHGVRQMRSCWADGAGYVTECPIHPGGEKTYRFNVTGQVGTLWWHAHVTCLRATINGAFIIRPRDGKYPFPTPAKDVPIIIGEWWELDLIELDRRMLDGNFDDNPLSATINGKLGDLSNCSGTVEESFVLDVKRGESYLLRVINTALFSEYYFKVAGHTFTVVGADGNYLTPYKTDMVTVAPGEAIDVLMFADAPPAYYHMVALANQPPPPDLQIPQLTSRGLVRYTGAAMDSNNLPMPMPVMPDQHNTMPSYYFRRNLTGLALPEQQQRHRVPAHVDERLLITLGLGSICRGGNTTTCKRGRSPETVVVATMNNVSFHHTNATALLEHYYDGTPEGVYTEDFPVRPPRPFNYTDRELIPAGPLEAALEPTAKAMRLRRFRYNASVEIVFQSTTLLQSDSNPMHLHGYDVFVLAQGLGNFDPKRDVEKFNYHNPQLRNTVQVPRGGWAAVRFLTDNPGMWYLHCHFEFHIIMGMATAFIVEDGPTPETSLPPPPPEFKRCGTNGLSQP</sequence>
<protein>
    <recommendedName>
        <fullName>Putative laccase-18</fullName>
        <ecNumber>1.10.3.2</ecNumber>
    </recommendedName>
    <alternativeName>
        <fullName>Benzenediol:oxygen oxidoreductase 18</fullName>
    </alternativeName>
    <alternativeName>
        <fullName>Diphenol oxidase 18</fullName>
    </alternativeName>
    <alternativeName>
        <fullName>Urishiol oxidase 18</fullName>
    </alternativeName>
</protein>
<name>LAC18_ORYSI</name>
<gene>
    <name type="primary">LAC18</name>
    <name type="ORF">OsI_009829</name>
</gene>
<comment type="function">
    <text evidence="1">Lignin degradation and detoxification of lignin-derived products.</text>
</comment>
<comment type="catalytic activity">
    <reaction>
        <text>4 hydroquinone + O2 = 4 benzosemiquinone + 2 H2O</text>
        <dbReference type="Rhea" id="RHEA:11276"/>
        <dbReference type="ChEBI" id="CHEBI:15377"/>
        <dbReference type="ChEBI" id="CHEBI:15379"/>
        <dbReference type="ChEBI" id="CHEBI:17594"/>
        <dbReference type="ChEBI" id="CHEBI:17977"/>
        <dbReference type="EC" id="1.10.3.2"/>
    </reaction>
</comment>
<comment type="cofactor">
    <cofactor evidence="1">
        <name>Cu cation</name>
        <dbReference type="ChEBI" id="CHEBI:23378"/>
    </cofactor>
    <text evidence="1">Binds 4 Cu cations per monomer.</text>
</comment>
<comment type="subcellular location">
    <subcellularLocation>
        <location evidence="4">Secreted</location>
        <location evidence="4">Extracellular space</location>
        <location evidence="4">Apoplast</location>
    </subcellularLocation>
</comment>
<comment type="similarity">
    <text evidence="4">Belongs to the multicopper oxidase family.</text>
</comment>
<evidence type="ECO:0000250" key="1"/>
<evidence type="ECO:0000255" key="2"/>
<evidence type="ECO:0000256" key="3">
    <source>
        <dbReference type="SAM" id="MobiDB-lite"/>
    </source>
</evidence>
<evidence type="ECO:0000305" key="4"/>
<accession>A2XCN6</accession>
<organism>
    <name type="scientific">Oryza sativa subsp. indica</name>
    <name type="common">Rice</name>
    <dbReference type="NCBI Taxonomy" id="39946"/>
    <lineage>
        <taxon>Eukaryota</taxon>
        <taxon>Viridiplantae</taxon>
        <taxon>Streptophyta</taxon>
        <taxon>Embryophyta</taxon>
        <taxon>Tracheophyta</taxon>
        <taxon>Spermatophyta</taxon>
        <taxon>Magnoliopsida</taxon>
        <taxon>Liliopsida</taxon>
        <taxon>Poales</taxon>
        <taxon>Poaceae</taxon>
        <taxon>BOP clade</taxon>
        <taxon>Oryzoideae</taxon>
        <taxon>Oryzeae</taxon>
        <taxon>Oryzinae</taxon>
        <taxon>Oryza</taxon>
        <taxon>Oryza sativa</taxon>
    </lineage>
</organism>
<keyword id="KW-0052">Apoplast</keyword>
<keyword id="KW-0186">Copper</keyword>
<keyword id="KW-0325">Glycoprotein</keyword>
<keyword id="KW-0439">Lignin degradation</keyword>
<keyword id="KW-0479">Metal-binding</keyword>
<keyword id="KW-0560">Oxidoreductase</keyword>
<keyword id="KW-1185">Reference proteome</keyword>
<keyword id="KW-0677">Repeat</keyword>
<keyword id="KW-0964">Secreted</keyword>
<keyword id="KW-0732">Signal</keyword>
<proteinExistence type="inferred from homology"/>
<feature type="signal peptide" evidence="2">
    <location>
        <begin position="1"/>
        <end position="29"/>
    </location>
</feature>
<feature type="chain" id="PRO_0000291902" description="Putative laccase-18">
    <location>
        <begin position="30"/>
        <end position="595"/>
    </location>
</feature>
<feature type="domain" description="Plastocyanin-like 1">
    <location>
        <begin position="37"/>
        <end position="153"/>
    </location>
</feature>
<feature type="domain" description="Plastocyanin-like 2">
    <location>
        <begin position="162"/>
        <end position="316"/>
    </location>
</feature>
<feature type="domain" description="Plastocyanin-like 3">
    <location>
        <begin position="429"/>
        <end position="571"/>
    </location>
</feature>
<feature type="region of interest" description="Disordered" evidence="3">
    <location>
        <begin position="570"/>
        <end position="595"/>
    </location>
</feature>
<feature type="binding site" evidence="1">
    <location>
        <position position="87"/>
    </location>
    <ligand>
        <name>Cu cation</name>
        <dbReference type="ChEBI" id="CHEBI:23378"/>
        <label>1</label>
    </ligand>
</feature>
<feature type="binding site" evidence="1">
    <location>
        <position position="89"/>
    </location>
    <ligand>
        <name>Cu cation</name>
        <dbReference type="ChEBI" id="CHEBI:23378"/>
        <label>2</label>
    </ligand>
</feature>
<feature type="binding site" evidence="1">
    <location>
        <position position="132"/>
    </location>
    <ligand>
        <name>Cu cation</name>
        <dbReference type="ChEBI" id="CHEBI:23378"/>
        <label>2</label>
    </ligand>
</feature>
<feature type="binding site" evidence="1">
    <location>
        <position position="134"/>
    </location>
    <ligand>
        <name>Cu cation</name>
        <dbReference type="ChEBI" id="CHEBI:23378"/>
        <label>3</label>
    </ligand>
</feature>
<feature type="binding site" evidence="2">
    <location>
        <position position="488"/>
    </location>
    <ligand>
        <name>Cu cation</name>
        <dbReference type="ChEBI" id="CHEBI:23378"/>
        <label>4</label>
    </ligand>
</feature>
<feature type="binding site" evidence="1">
    <location>
        <position position="491"/>
    </location>
    <ligand>
        <name>Cu cation</name>
        <dbReference type="ChEBI" id="CHEBI:23378"/>
        <label>1</label>
    </ligand>
</feature>
<feature type="binding site" evidence="1">
    <location>
        <position position="493"/>
    </location>
    <ligand>
        <name>Cu cation</name>
        <dbReference type="ChEBI" id="CHEBI:23378"/>
        <label>3</label>
    </ligand>
</feature>
<feature type="binding site" evidence="1">
    <location>
        <position position="550"/>
    </location>
    <ligand>
        <name>Cu cation</name>
        <dbReference type="ChEBI" id="CHEBI:23378"/>
        <label>3</label>
    </ligand>
</feature>
<feature type="binding site" evidence="2">
    <location>
        <position position="551"/>
    </location>
    <ligand>
        <name>Cu cation</name>
        <dbReference type="ChEBI" id="CHEBI:23378"/>
        <label>4</label>
    </ligand>
</feature>
<feature type="binding site" evidence="1">
    <location>
        <position position="552"/>
    </location>
    <ligand>
        <name>Cu cation</name>
        <dbReference type="ChEBI" id="CHEBI:23378"/>
        <label>2</label>
    </ligand>
</feature>
<feature type="binding site" evidence="2">
    <location>
        <position position="556"/>
    </location>
    <ligand>
        <name>Cu cation</name>
        <dbReference type="ChEBI" id="CHEBI:23378"/>
        <label>4</label>
    </ligand>
</feature>
<feature type="binding site" evidence="2">
    <location>
        <position position="561"/>
    </location>
    <ligand>
        <name>Cu cation</name>
        <dbReference type="ChEBI" id="CHEBI:23378"/>
        <label>4</label>
    </ligand>
</feature>
<feature type="glycosylation site" description="N-linked (GlcNAc...) asparagine" evidence="2">
    <location>
        <position position="42"/>
    </location>
</feature>
<feature type="glycosylation site" description="N-linked (GlcNAc...) asparagine" evidence="2">
    <location>
        <position position="48"/>
    </location>
</feature>
<feature type="glycosylation site" description="N-linked (GlcNAc...) asparagine" evidence="2">
    <location>
        <position position="121"/>
    </location>
</feature>
<feature type="glycosylation site" description="N-linked (GlcNAc...) asparagine" evidence="2">
    <location>
        <position position="206"/>
    </location>
</feature>
<feature type="glycosylation site" description="N-linked (GlcNAc...) asparagine" evidence="2">
    <location>
        <position position="345"/>
    </location>
</feature>
<feature type="glycosylation site" description="N-linked (GlcNAc...) asparagine" evidence="2">
    <location>
        <position position="382"/>
    </location>
</feature>
<feature type="glycosylation site" description="N-linked (GlcNAc...) asparagine" evidence="2">
    <location>
        <position position="402"/>
    </location>
</feature>
<feature type="glycosylation site" description="N-linked (GlcNAc...) asparagine" evidence="2">
    <location>
        <position position="409"/>
    </location>
</feature>
<feature type="glycosylation site" description="N-linked (GlcNAc...) asparagine" evidence="2">
    <location>
        <position position="439"/>
    </location>
</feature>
<feature type="glycosylation site" description="N-linked (GlcNAc...) asparagine" evidence="2">
    <location>
        <position position="470"/>
    </location>
</feature>